<proteinExistence type="evidence at protein level"/>
<dbReference type="EMBL" id="AF234838">
    <property type="protein sequence ID" value="AAF37891.1"/>
    <property type="molecule type" value="mRNA"/>
</dbReference>
<dbReference type="EMBL" id="AK140319">
    <property type="protein sequence ID" value="BAE24331.1"/>
    <property type="molecule type" value="mRNA"/>
</dbReference>
<dbReference type="EMBL" id="AK140325">
    <property type="protein sequence ID" value="BAE24336.1"/>
    <property type="molecule type" value="mRNA"/>
</dbReference>
<dbReference type="EMBL" id="AF086810">
    <property type="protein sequence ID" value="AAC36336.1"/>
    <property type="molecule type" value="mRNA"/>
</dbReference>
<dbReference type="EMBL" id="BC057334">
    <property type="protein sequence ID" value="AAH57334.1"/>
    <property type="molecule type" value="mRNA"/>
</dbReference>
<dbReference type="CCDS" id="CCDS39327.1"/>
<dbReference type="PIR" id="JC7278">
    <property type="entry name" value="JC7278"/>
</dbReference>
<dbReference type="RefSeq" id="NP_001289867.1">
    <property type="nucleotide sequence ID" value="NM_001302938.2"/>
</dbReference>
<dbReference type="RefSeq" id="NP_001289868.1">
    <property type="nucleotide sequence ID" value="NM_001302939.1"/>
</dbReference>
<dbReference type="RefSeq" id="NP_001412399.1">
    <property type="nucleotide sequence ID" value="NM_001425470.1"/>
</dbReference>
<dbReference type="RefSeq" id="NP_001412400.1">
    <property type="nucleotide sequence ID" value="NM_001425471.1"/>
</dbReference>
<dbReference type="RefSeq" id="NP_061295.2">
    <property type="nucleotide sequence ID" value="NM_018825.4"/>
</dbReference>
<dbReference type="RefSeq" id="XP_006504483.2">
    <property type="nucleotide sequence ID" value="XM_006504420.3"/>
</dbReference>
<dbReference type="RefSeq" id="XP_006504485.1">
    <property type="nucleotide sequence ID" value="XM_006504422.2"/>
</dbReference>
<dbReference type="PDB" id="1V5M">
    <property type="method" value="NMR"/>
    <property type="chains" value="A=177-299"/>
</dbReference>
<dbReference type="PDBsum" id="1V5M"/>
<dbReference type="BMRB" id="Q9JID9"/>
<dbReference type="SMR" id="Q9JID9"/>
<dbReference type="BioGRID" id="204795">
    <property type="interactions" value="10"/>
</dbReference>
<dbReference type="FunCoup" id="Q9JID9">
    <property type="interactions" value="362"/>
</dbReference>
<dbReference type="IntAct" id="Q9JID9">
    <property type="interactions" value="1"/>
</dbReference>
<dbReference type="MINT" id="Q9JID9"/>
<dbReference type="STRING" id="10090.ENSMUSP00000005188"/>
<dbReference type="iPTMnet" id="Q9JID9"/>
<dbReference type="PhosphoSitePlus" id="Q9JID9"/>
<dbReference type="jPOST" id="Q9JID9"/>
<dbReference type="PaxDb" id="10090-ENSMUSP00000005188"/>
<dbReference type="PeptideAtlas" id="Q9JID9"/>
<dbReference type="ProteomicsDB" id="261341"/>
<dbReference type="Antibodypedia" id="31045">
    <property type="antibodies" value="77 antibodies from 16 providers"/>
</dbReference>
<dbReference type="DNASU" id="23921"/>
<dbReference type="Ensembl" id="ENSMUST00000005188.14">
    <property type="protein sequence ID" value="ENSMUSP00000005188.10"/>
    <property type="gene ID" value="ENSMUSG00000005057.14"/>
</dbReference>
<dbReference type="Ensembl" id="ENSMUST00000196397.5">
    <property type="protein sequence ID" value="ENSMUSP00000142398.2"/>
    <property type="gene ID" value="ENSMUSG00000005057.14"/>
</dbReference>
<dbReference type="GeneID" id="23921"/>
<dbReference type="KEGG" id="mmu:23921"/>
<dbReference type="UCSC" id="uc009aag.2">
    <property type="organism name" value="mouse"/>
</dbReference>
<dbReference type="AGR" id="MGI:1345171"/>
<dbReference type="CTD" id="10603"/>
<dbReference type="MGI" id="MGI:1345171">
    <property type="gene designation" value="Sh2b2"/>
</dbReference>
<dbReference type="VEuPathDB" id="HostDB:ENSMUSG00000005057"/>
<dbReference type="eggNOG" id="ENOG502QT43">
    <property type="taxonomic scope" value="Eukaryota"/>
</dbReference>
<dbReference type="GeneTree" id="ENSGT00950000183191"/>
<dbReference type="InParanoid" id="Q9JID9"/>
<dbReference type="OMA" id="TQKWEKS"/>
<dbReference type="OrthoDB" id="10047184at2759"/>
<dbReference type="PhylomeDB" id="Q9JID9"/>
<dbReference type="TreeFam" id="TF323184"/>
<dbReference type="Reactome" id="R-MMU-1433559">
    <property type="pathway name" value="Regulation of KIT signaling"/>
</dbReference>
<dbReference type="Reactome" id="R-MMU-983231">
    <property type="pathway name" value="Factors involved in megakaryocyte development and platelet production"/>
</dbReference>
<dbReference type="BioGRID-ORCS" id="23921">
    <property type="hits" value="1 hit in 78 CRISPR screens"/>
</dbReference>
<dbReference type="ChiTaRS" id="Sh2b2">
    <property type="organism name" value="mouse"/>
</dbReference>
<dbReference type="EvolutionaryTrace" id="Q9JID9"/>
<dbReference type="PRO" id="PR:Q9JID9"/>
<dbReference type="Proteomes" id="UP000000589">
    <property type="component" value="Chromosome 5"/>
</dbReference>
<dbReference type="RNAct" id="Q9JID9">
    <property type="molecule type" value="protein"/>
</dbReference>
<dbReference type="Bgee" id="ENSMUSG00000005057">
    <property type="expression patterns" value="Expressed in brown adipose tissue and 167 other cell types or tissues"/>
</dbReference>
<dbReference type="ExpressionAtlas" id="Q9JID9">
    <property type="expression patterns" value="baseline and differential"/>
</dbReference>
<dbReference type="GO" id="GO:0005884">
    <property type="term" value="C:actin filament"/>
    <property type="evidence" value="ECO:0000314"/>
    <property type="project" value="MGI"/>
</dbReference>
<dbReference type="GO" id="GO:0005737">
    <property type="term" value="C:cytoplasm"/>
    <property type="evidence" value="ECO:0000250"/>
    <property type="project" value="UniProtKB"/>
</dbReference>
<dbReference type="GO" id="GO:0005829">
    <property type="term" value="C:cytosol"/>
    <property type="evidence" value="ECO:0007669"/>
    <property type="project" value="Ensembl"/>
</dbReference>
<dbReference type="GO" id="GO:0005886">
    <property type="term" value="C:plasma membrane"/>
    <property type="evidence" value="ECO:0000250"/>
    <property type="project" value="UniProtKB"/>
</dbReference>
<dbReference type="GO" id="GO:0001726">
    <property type="term" value="C:ruffle"/>
    <property type="evidence" value="ECO:0000314"/>
    <property type="project" value="MGI"/>
</dbReference>
<dbReference type="GO" id="GO:0001725">
    <property type="term" value="C:stress fiber"/>
    <property type="evidence" value="ECO:0000314"/>
    <property type="project" value="MGI"/>
</dbReference>
<dbReference type="GO" id="GO:0042169">
    <property type="term" value="F:SH2 domain binding"/>
    <property type="evidence" value="ECO:0007669"/>
    <property type="project" value="Ensembl"/>
</dbReference>
<dbReference type="GO" id="GO:0035591">
    <property type="term" value="F:signaling adaptor activity"/>
    <property type="evidence" value="ECO:0000314"/>
    <property type="project" value="UniProtKB"/>
</dbReference>
<dbReference type="GO" id="GO:0005068">
    <property type="term" value="F:transmembrane receptor protein tyrosine kinase adaptor activity"/>
    <property type="evidence" value="ECO:0000314"/>
    <property type="project" value="MGI"/>
</dbReference>
<dbReference type="GO" id="GO:0030036">
    <property type="term" value="P:actin cytoskeleton organization"/>
    <property type="evidence" value="ECO:0000315"/>
    <property type="project" value="MGI"/>
</dbReference>
<dbReference type="GO" id="GO:0050853">
    <property type="term" value="P:B cell receptor signaling pathway"/>
    <property type="evidence" value="ECO:0000314"/>
    <property type="project" value="MGI"/>
</dbReference>
<dbReference type="GO" id="GO:0001922">
    <property type="term" value="P:B-1 B cell homeostasis"/>
    <property type="evidence" value="ECO:0000315"/>
    <property type="project" value="MGI"/>
</dbReference>
<dbReference type="GO" id="GO:0050873">
    <property type="term" value="P:brown fat cell differentiation"/>
    <property type="evidence" value="ECO:0000314"/>
    <property type="project" value="MGI"/>
</dbReference>
<dbReference type="GO" id="GO:0019221">
    <property type="term" value="P:cytokine-mediated signaling pathway"/>
    <property type="evidence" value="ECO:0000314"/>
    <property type="project" value="MGI"/>
</dbReference>
<dbReference type="GO" id="GO:0046323">
    <property type="term" value="P:D-glucose import"/>
    <property type="evidence" value="ECO:0000247"/>
    <property type="project" value="MGI"/>
</dbReference>
<dbReference type="GO" id="GO:0051649">
    <property type="term" value="P:establishment of localization in cell"/>
    <property type="evidence" value="ECO:0000247"/>
    <property type="project" value="MGI"/>
</dbReference>
<dbReference type="GO" id="GO:0042593">
    <property type="term" value="P:glucose homeostasis"/>
    <property type="evidence" value="ECO:0000247"/>
    <property type="project" value="MGI"/>
</dbReference>
<dbReference type="GO" id="GO:0008286">
    <property type="term" value="P:insulin receptor signaling pathway"/>
    <property type="evidence" value="ECO:0000314"/>
    <property type="project" value="MGI"/>
</dbReference>
<dbReference type="GO" id="GO:0035556">
    <property type="term" value="P:intracellular signal transduction"/>
    <property type="evidence" value="ECO:0000314"/>
    <property type="project" value="UniProtKB"/>
</dbReference>
<dbReference type="GO" id="GO:0046325">
    <property type="term" value="P:negative regulation of D-glucose import"/>
    <property type="evidence" value="ECO:0000247"/>
    <property type="project" value="MGI"/>
</dbReference>
<dbReference type="GO" id="GO:0050776">
    <property type="term" value="P:regulation of immune response"/>
    <property type="evidence" value="ECO:0000315"/>
    <property type="project" value="MGI"/>
</dbReference>
<dbReference type="GO" id="GO:0019222">
    <property type="term" value="P:regulation of metabolic process"/>
    <property type="evidence" value="ECO:0000315"/>
    <property type="project" value="MGI"/>
</dbReference>
<dbReference type="CDD" id="cd01231">
    <property type="entry name" value="PH_SH2B_family"/>
    <property type="match status" value="1"/>
</dbReference>
<dbReference type="CDD" id="cd10411">
    <property type="entry name" value="SH2_SH2B2"/>
    <property type="match status" value="1"/>
</dbReference>
<dbReference type="FunFam" id="3.30.505.10:FF:000008">
    <property type="entry name" value="SH2B adapter protein 1 isoform 2"/>
    <property type="match status" value="1"/>
</dbReference>
<dbReference type="FunFam" id="2.30.29.30:FF:000187">
    <property type="entry name" value="SH2B adapter protein 2"/>
    <property type="match status" value="1"/>
</dbReference>
<dbReference type="Gene3D" id="6.10.140.110">
    <property type="match status" value="1"/>
</dbReference>
<dbReference type="Gene3D" id="2.30.29.30">
    <property type="entry name" value="Pleckstrin-homology domain (PH domain)/Phosphotyrosine-binding domain (PTB)"/>
    <property type="match status" value="1"/>
</dbReference>
<dbReference type="Gene3D" id="3.30.505.10">
    <property type="entry name" value="SH2 domain"/>
    <property type="match status" value="1"/>
</dbReference>
<dbReference type="InterPro" id="IPR011993">
    <property type="entry name" value="PH-like_dom_sf"/>
</dbReference>
<dbReference type="InterPro" id="IPR001849">
    <property type="entry name" value="PH_domain"/>
</dbReference>
<dbReference type="InterPro" id="IPR015012">
    <property type="entry name" value="Phe_ZIP"/>
</dbReference>
<dbReference type="InterPro" id="IPR036290">
    <property type="entry name" value="Phe_ZIP_sf"/>
</dbReference>
<dbReference type="InterPro" id="IPR000980">
    <property type="entry name" value="SH2"/>
</dbReference>
<dbReference type="InterPro" id="IPR036860">
    <property type="entry name" value="SH2_dom_sf"/>
</dbReference>
<dbReference type="InterPro" id="IPR030523">
    <property type="entry name" value="SH2B"/>
</dbReference>
<dbReference type="InterPro" id="IPR035058">
    <property type="entry name" value="SH2B2_SH2"/>
</dbReference>
<dbReference type="PANTHER" id="PTHR10872">
    <property type="entry name" value="SH2B ADAPTER PROTEIN"/>
    <property type="match status" value="1"/>
</dbReference>
<dbReference type="PANTHER" id="PTHR10872:SF4">
    <property type="entry name" value="SH2B ADAPTER PROTEIN 2"/>
    <property type="match status" value="1"/>
</dbReference>
<dbReference type="Pfam" id="PF00169">
    <property type="entry name" value="PH"/>
    <property type="match status" value="1"/>
</dbReference>
<dbReference type="Pfam" id="PF08916">
    <property type="entry name" value="Phe_ZIP"/>
    <property type="match status" value="1"/>
</dbReference>
<dbReference type="Pfam" id="PF00017">
    <property type="entry name" value="SH2"/>
    <property type="match status" value="1"/>
</dbReference>
<dbReference type="SMART" id="SM00233">
    <property type="entry name" value="PH"/>
    <property type="match status" value="1"/>
</dbReference>
<dbReference type="SMART" id="SM00252">
    <property type="entry name" value="SH2"/>
    <property type="match status" value="1"/>
</dbReference>
<dbReference type="SUPFAM" id="SSF50729">
    <property type="entry name" value="PH domain-like"/>
    <property type="match status" value="1"/>
</dbReference>
<dbReference type="SUPFAM" id="SSF109805">
    <property type="entry name" value="Phenylalanine zipper"/>
    <property type="match status" value="1"/>
</dbReference>
<dbReference type="SUPFAM" id="SSF55550">
    <property type="entry name" value="SH2 domain"/>
    <property type="match status" value="1"/>
</dbReference>
<dbReference type="PROSITE" id="PS50003">
    <property type="entry name" value="PH_DOMAIN"/>
    <property type="match status" value="1"/>
</dbReference>
<dbReference type="PROSITE" id="PS50001">
    <property type="entry name" value="SH2"/>
    <property type="match status" value="1"/>
</dbReference>
<name>SH2B2_MOUSE</name>
<evidence type="ECO:0000250" key="1"/>
<evidence type="ECO:0000255" key="2">
    <source>
        <dbReference type="PROSITE-ProRule" id="PRU00145"/>
    </source>
</evidence>
<evidence type="ECO:0000255" key="3">
    <source>
        <dbReference type="PROSITE-ProRule" id="PRU00191"/>
    </source>
</evidence>
<evidence type="ECO:0000256" key="4">
    <source>
        <dbReference type="SAM" id="MobiDB-lite"/>
    </source>
</evidence>
<evidence type="ECO:0000269" key="5">
    <source>
    </source>
</evidence>
<evidence type="ECO:0000305" key="6"/>
<evidence type="ECO:0000305" key="7">
    <source>
    </source>
</evidence>
<evidence type="ECO:0000312" key="8">
    <source>
        <dbReference type="EMBL" id="AAF37891.1"/>
    </source>
</evidence>
<evidence type="ECO:0007744" key="9">
    <source>
    </source>
</evidence>
<evidence type="ECO:0007744" key="10">
    <source>
    </source>
</evidence>
<evidence type="ECO:0007829" key="11">
    <source>
        <dbReference type="PDB" id="1V5M"/>
    </source>
</evidence>
<keyword id="KW-0002">3D-structure</keyword>
<keyword id="KW-1003">Cell membrane</keyword>
<keyword id="KW-0963">Cytoplasm</keyword>
<keyword id="KW-0472">Membrane</keyword>
<keyword id="KW-0597">Phosphoprotein</keyword>
<keyword id="KW-1185">Reference proteome</keyword>
<keyword id="KW-0727">SH2 domain</keyword>
<gene>
    <name type="primary">Sh2b2</name>
    <name type="synonym">Aps</name>
</gene>
<protein>
    <recommendedName>
        <fullName>SH2B adapter protein 2</fullName>
    </recommendedName>
    <alternativeName>
        <fullName>Adapter protein with pleckstrin homology and Src homology 2 domains</fullName>
    </alternativeName>
    <alternativeName>
        <fullName>SH2 and PH domain-containing adapter protein APS</fullName>
    </alternativeName>
</protein>
<reference evidence="6" key="1">
    <citation type="journal article" date="2000" name="Biochem. Biophys. Res. Commun.">
        <title>Molecular cloning of the mouse APS as a member of the Lnk family adaptor proteins.</title>
        <authorList>
            <person name="Iseki M."/>
            <person name="Takaki S."/>
            <person name="Takatsu K."/>
        </authorList>
    </citation>
    <scope>NUCLEOTIDE SEQUENCE [MRNA]</scope>
    <scope>TISSUE SPECIFICITY</scope>
    <scope>PHOSPHORYLATION AT TYR-47 AND TYR-618</scope>
    <source>
        <tissue evidence="8">Splenocyte</tissue>
    </source>
</reference>
<reference key="2">
    <citation type="journal article" date="2005" name="Science">
        <title>The transcriptional landscape of the mammalian genome.</title>
        <authorList>
            <person name="Carninci P."/>
            <person name="Kasukawa T."/>
            <person name="Katayama S."/>
            <person name="Gough J."/>
            <person name="Frith M.C."/>
            <person name="Maeda N."/>
            <person name="Oyama R."/>
            <person name="Ravasi T."/>
            <person name="Lenhard B."/>
            <person name="Wells C."/>
            <person name="Kodzius R."/>
            <person name="Shimokawa K."/>
            <person name="Bajic V.B."/>
            <person name="Brenner S.E."/>
            <person name="Batalov S."/>
            <person name="Forrest A.R."/>
            <person name="Zavolan M."/>
            <person name="Davis M.J."/>
            <person name="Wilming L.G."/>
            <person name="Aidinis V."/>
            <person name="Allen J.E."/>
            <person name="Ambesi-Impiombato A."/>
            <person name="Apweiler R."/>
            <person name="Aturaliya R.N."/>
            <person name="Bailey T.L."/>
            <person name="Bansal M."/>
            <person name="Baxter L."/>
            <person name="Beisel K.W."/>
            <person name="Bersano T."/>
            <person name="Bono H."/>
            <person name="Chalk A.M."/>
            <person name="Chiu K.P."/>
            <person name="Choudhary V."/>
            <person name="Christoffels A."/>
            <person name="Clutterbuck D.R."/>
            <person name="Crowe M.L."/>
            <person name="Dalla E."/>
            <person name="Dalrymple B.P."/>
            <person name="de Bono B."/>
            <person name="Della Gatta G."/>
            <person name="di Bernardo D."/>
            <person name="Down T."/>
            <person name="Engstrom P."/>
            <person name="Fagiolini M."/>
            <person name="Faulkner G."/>
            <person name="Fletcher C.F."/>
            <person name="Fukushima T."/>
            <person name="Furuno M."/>
            <person name="Futaki S."/>
            <person name="Gariboldi M."/>
            <person name="Georgii-Hemming P."/>
            <person name="Gingeras T.R."/>
            <person name="Gojobori T."/>
            <person name="Green R.E."/>
            <person name="Gustincich S."/>
            <person name="Harbers M."/>
            <person name="Hayashi Y."/>
            <person name="Hensch T.K."/>
            <person name="Hirokawa N."/>
            <person name="Hill D."/>
            <person name="Huminiecki L."/>
            <person name="Iacono M."/>
            <person name="Ikeo K."/>
            <person name="Iwama A."/>
            <person name="Ishikawa T."/>
            <person name="Jakt M."/>
            <person name="Kanapin A."/>
            <person name="Katoh M."/>
            <person name="Kawasawa Y."/>
            <person name="Kelso J."/>
            <person name="Kitamura H."/>
            <person name="Kitano H."/>
            <person name="Kollias G."/>
            <person name="Krishnan S.P."/>
            <person name="Kruger A."/>
            <person name="Kummerfeld S.K."/>
            <person name="Kurochkin I.V."/>
            <person name="Lareau L.F."/>
            <person name="Lazarevic D."/>
            <person name="Lipovich L."/>
            <person name="Liu J."/>
            <person name="Liuni S."/>
            <person name="McWilliam S."/>
            <person name="Madan Babu M."/>
            <person name="Madera M."/>
            <person name="Marchionni L."/>
            <person name="Matsuda H."/>
            <person name="Matsuzawa S."/>
            <person name="Miki H."/>
            <person name="Mignone F."/>
            <person name="Miyake S."/>
            <person name="Morris K."/>
            <person name="Mottagui-Tabar S."/>
            <person name="Mulder N."/>
            <person name="Nakano N."/>
            <person name="Nakauchi H."/>
            <person name="Ng P."/>
            <person name="Nilsson R."/>
            <person name="Nishiguchi S."/>
            <person name="Nishikawa S."/>
            <person name="Nori F."/>
            <person name="Ohara O."/>
            <person name="Okazaki Y."/>
            <person name="Orlando V."/>
            <person name="Pang K.C."/>
            <person name="Pavan W.J."/>
            <person name="Pavesi G."/>
            <person name="Pesole G."/>
            <person name="Petrovsky N."/>
            <person name="Piazza S."/>
            <person name="Reed J."/>
            <person name="Reid J.F."/>
            <person name="Ring B.Z."/>
            <person name="Ringwald M."/>
            <person name="Rost B."/>
            <person name="Ruan Y."/>
            <person name="Salzberg S.L."/>
            <person name="Sandelin A."/>
            <person name="Schneider C."/>
            <person name="Schoenbach C."/>
            <person name="Sekiguchi K."/>
            <person name="Semple C.A."/>
            <person name="Seno S."/>
            <person name="Sessa L."/>
            <person name="Sheng Y."/>
            <person name="Shibata Y."/>
            <person name="Shimada H."/>
            <person name="Shimada K."/>
            <person name="Silva D."/>
            <person name="Sinclair B."/>
            <person name="Sperling S."/>
            <person name="Stupka E."/>
            <person name="Sugiura K."/>
            <person name="Sultana R."/>
            <person name="Takenaka Y."/>
            <person name="Taki K."/>
            <person name="Tammoja K."/>
            <person name="Tan S.L."/>
            <person name="Tang S."/>
            <person name="Taylor M.S."/>
            <person name="Tegner J."/>
            <person name="Teichmann S.A."/>
            <person name="Ueda H.R."/>
            <person name="van Nimwegen E."/>
            <person name="Verardo R."/>
            <person name="Wei C.L."/>
            <person name="Yagi K."/>
            <person name="Yamanishi H."/>
            <person name="Zabarovsky E."/>
            <person name="Zhu S."/>
            <person name="Zimmer A."/>
            <person name="Hide W."/>
            <person name="Bult C."/>
            <person name="Grimmond S.M."/>
            <person name="Teasdale R.D."/>
            <person name="Liu E.T."/>
            <person name="Brusic V."/>
            <person name="Quackenbush J."/>
            <person name="Wahlestedt C."/>
            <person name="Mattick J.S."/>
            <person name="Hume D.A."/>
            <person name="Kai C."/>
            <person name="Sasaki D."/>
            <person name="Tomaru Y."/>
            <person name="Fukuda S."/>
            <person name="Kanamori-Katayama M."/>
            <person name="Suzuki M."/>
            <person name="Aoki J."/>
            <person name="Arakawa T."/>
            <person name="Iida J."/>
            <person name="Imamura K."/>
            <person name="Itoh M."/>
            <person name="Kato T."/>
            <person name="Kawaji H."/>
            <person name="Kawagashira N."/>
            <person name="Kawashima T."/>
            <person name="Kojima M."/>
            <person name="Kondo S."/>
            <person name="Konno H."/>
            <person name="Nakano K."/>
            <person name="Ninomiya N."/>
            <person name="Nishio T."/>
            <person name="Okada M."/>
            <person name="Plessy C."/>
            <person name="Shibata K."/>
            <person name="Shiraki T."/>
            <person name="Suzuki S."/>
            <person name="Tagami M."/>
            <person name="Waki K."/>
            <person name="Watahiki A."/>
            <person name="Okamura-Oho Y."/>
            <person name="Suzuki H."/>
            <person name="Kawai J."/>
            <person name="Hayashizaki Y."/>
        </authorList>
    </citation>
    <scope>NUCLEOTIDE SEQUENCE [LARGE SCALE MRNA]</scope>
    <source>
        <strain>C57BL/6J</strain>
        <tissue>Adipose tissue</tissue>
    </source>
</reference>
<reference key="3">
    <citation type="journal article" date="2004" name="Genome Res.">
        <title>The status, quality, and expansion of the NIH full-length cDNA project: the Mammalian Gene Collection (MGC).</title>
        <authorList>
            <consortium name="The MGC Project Team"/>
        </authorList>
    </citation>
    <scope>NUCLEOTIDE SEQUENCE [LARGE SCALE MRNA]</scope>
    <source>
        <strain>C57BL/6J</strain>
        <tissue>Brain</tissue>
    </source>
</reference>
<reference evidence="6" key="4">
    <citation type="submission" date="1998-08" db="EMBL/GenBank/DDBJ databases">
        <title>Insulin receptor cytoplasmic domain contains five functional SH2 motifs: mapping SH2 motifs for p85alpha, c-Src, c-Abl, Grb-10, ras-Gap, and mouse APS.</title>
        <authorList>
            <person name="Belhadri A."/>
            <person name="Goren H.J."/>
        </authorList>
    </citation>
    <scope>NUCLEOTIDE SEQUENCE [MRNA] OF 370-525</scope>
</reference>
<reference evidence="6" key="5">
    <citation type="journal article" date="2003" name="Biochem. J.">
        <title>The adapter protein APS associates with the multifunctional docking sites Tyr-568 and Tyr-936 in c-Kit.</title>
        <authorList>
            <person name="Wollberg P."/>
            <person name="Lennartsson J."/>
            <person name="Gottfridsson E."/>
            <person name="Yoshimura A."/>
            <person name="Ronnstrand L."/>
        </authorList>
    </citation>
    <scope>INTERACTION WITH EPOR AND KIT</scope>
</reference>
<reference key="6">
    <citation type="journal article" date="2007" name="Proc. Natl. Acad. Sci. U.S.A.">
        <title>Large-scale phosphorylation analysis of mouse liver.</title>
        <authorList>
            <person name="Villen J."/>
            <person name="Beausoleil S.A."/>
            <person name="Gerber S.A."/>
            <person name="Gygi S.P."/>
        </authorList>
    </citation>
    <scope>IDENTIFICATION BY MASS SPECTROMETRY [LARGE SCALE ANALYSIS]</scope>
    <source>
        <tissue>Liver</tissue>
    </source>
</reference>
<reference key="7">
    <citation type="journal article" date="2009" name="Immunity">
        <title>The phagosomal proteome in interferon-gamma-activated macrophages.</title>
        <authorList>
            <person name="Trost M."/>
            <person name="English L."/>
            <person name="Lemieux S."/>
            <person name="Courcelles M."/>
            <person name="Desjardins M."/>
            <person name="Thibault P."/>
        </authorList>
    </citation>
    <scope>PHOSPHORYLATION [LARGE SCALE ANALYSIS] AT SER-597</scope>
    <scope>IDENTIFICATION BY MASS SPECTROMETRY [LARGE SCALE ANALYSIS]</scope>
</reference>
<reference key="8">
    <citation type="journal article" date="2010" name="Cell">
        <title>A tissue-specific atlas of mouse protein phosphorylation and expression.</title>
        <authorList>
            <person name="Huttlin E.L."/>
            <person name="Jedrychowski M.P."/>
            <person name="Elias J.E."/>
            <person name="Goswami T."/>
            <person name="Rad R."/>
            <person name="Beausoleil S.A."/>
            <person name="Villen J."/>
            <person name="Haas W."/>
            <person name="Sowa M.E."/>
            <person name="Gygi S.P."/>
        </authorList>
    </citation>
    <scope>PHOSPHORYLATION [LARGE SCALE ANALYSIS] AT SER-130 AND SER-303</scope>
    <scope>IDENTIFICATION BY MASS SPECTROMETRY [LARGE SCALE ANALYSIS]</scope>
    <source>
        <tissue>Brain</tissue>
        <tissue>Brown adipose tissue</tissue>
        <tissue>Kidney</tissue>
        <tissue>Testis</tissue>
    </source>
</reference>
<reference evidence="6" key="9">
    <citation type="submission" date="2004-05" db="PDB data bank">
        <title>Solution structure of the pleckstrin homology domain of mouse APS.</title>
        <authorList>
            <consortium name="RIKEN structural genomics initiative (RSGI)"/>
        </authorList>
    </citation>
    <scope>STRUCTURE BY NMR OF 178-299</scope>
</reference>
<comment type="function">
    <text evidence="1">Adapter protein for several members of the tyrosine kinase receptor family. Involved in multiple signaling pathways. May be involved in coupling from immunoreceptor to Ras signaling. Acts as a negative regulator of cytokine signaling in collaboration with CBL. Binds to EPOR and suppresses EPO-induced STAT5 activation, possibly through a masking effect on STAT5 docking sites in EPOR. Suppresses PDGF-induced mitogenesis. May induce cytoskeletal reorganization via interaction with VAV3 (By similarity).</text>
</comment>
<comment type="subunit">
    <text evidence="1">Homodimer. Interacts with KIT/c-KIT, SHC1, EPOR, PDGFR, VAV1 and VAV3. Interacts (via N-terminal region) with SHC1. Interacts (via the phosphorylated C-terminus) with GRB2. Interacts (via its SH2 domain) with EPOR, INSR and KIT. Interacts with GRB2 after B-cell antigen receptor stimulation. Interacts (via PH domain) with VAV3. Interacts with NTRK1, NTRK2 and NTRK3 (phosphorylated); after stimulation of the receptor by its extracellular ligand and subsequent autophosphorylation of the receptor. Binds INSR, GRB2, ASB6 and CAP. Insulin stimulation leads to dissociation of CAP. Binds CBS only when SH2B2/APS has become phosphorylated. INSR binding does not depend on the phosphorylation of SH2B2/APS (By similarity).</text>
</comment>
<comment type="interaction">
    <interactant intactId="EBI-8100899">
        <id>Q9JID9</id>
    </interactant>
    <interactant intactId="EBI-6287052">
        <id>Q61851</id>
        <label>Fgfr3</label>
    </interactant>
    <organismsDiffer>false</organismsDiffer>
    <experiments>3</experiments>
</comment>
<comment type="subcellular location">
    <subcellularLocation>
        <location evidence="1">Cytoplasm</location>
    </subcellularLocation>
    <subcellularLocation>
        <location evidence="1">Cell membrane</location>
    </subcellularLocation>
    <text evidence="1">Cytoplasmic before PDGF stimulation. After PDGF stimulation, localized at the cell membrane and peripheral region (By similarity).</text>
</comment>
<comment type="tissue specificity">
    <text evidence="5">Strongly expressed in brain; also expressed in spleen, kidney and skeletal muscle, and at low levels in small intestine and bone marrow. Strongly expressed in B-cell lines, but not T-cell lines. Also expressed in myeloid and fibroblast cell lines.</text>
</comment>
<comment type="PTM">
    <text evidence="5">Tyrosine phosphorylated by JAK2, KIT and other kinases activated by B-cell receptor in response to stimulation with cytokines, IL3, IL5, PDGF, IGF1, IGF2, CSF2/GM-CSF and cross-linking of the B-cell receptor complex.</text>
</comment>
<comment type="similarity">
    <text evidence="6">Belongs to the SH2B adapter family.</text>
</comment>
<accession>Q9JID9</accession>
<accession>O88936</accession>
<accession>Q6PG00</accession>
<sequence length="621" mass="66557">MNGATPSSAAAPAPVPDWRQFCELHAQVAAVDFAHKFCRFLRDNPTYDTPDAGTSFSRHFAANFLAVFSEEVRRVLGSAADTMEPEPAVTSVTSALKTATYGHSRSSEDVSAHAATKARVRKGFSLRNMSLCVVDGVRDLWHRRSSPEPDGGATPKAAEPASEPRDKWTRRLRLARTLAAKVELVDIQREGALRFMVADDAASGPGGTAQWQKCRLLLRRAVAGERFRLEFFVPPKASRPKVSIPLSAIIEVRTTMPLEMPEKDNTFVLKVENGAEYILETIDSLQKHSWVADIQGCVDPGDSEEDTGLSCARGGCLASRVASCSCELLTDADMPRPPETTTAVGAVVTAPHGRARDTVGESLAHVPLETFLQTLESSGGVSENNNPGDEGAELDTDAEAELELSDYPWFHGTLSRVKAAQLVLAGGPRSHGLFVIRQSETRPGECVLTFNFQGKAKHLRLSLNGHGQCHVQHLWFQSVFDMLRHFHTHPIPLESGGSADITLRSYVRAQGPPPDPGPAPNTAAPVPACWTEPAGQHYFSSLATATCPPASPSNGAGASSSSGSSSSATSLPPRPAEGPLSAHSRSNSTEHLLDAASGATEEPTEATLGRARAVENQYSFY</sequence>
<feature type="chain" id="PRO_0000064648" description="SH2B adapter protein 2">
    <location>
        <begin position="1"/>
        <end position="621"/>
    </location>
</feature>
<feature type="domain" description="PH" evidence="2 6">
    <location>
        <begin position="186"/>
        <end position="299"/>
    </location>
</feature>
<feature type="domain" description="SH2" evidence="3 6">
    <location>
        <begin position="409"/>
        <end position="507"/>
    </location>
</feature>
<feature type="region of interest" description="Disordered" evidence="4">
    <location>
        <begin position="143"/>
        <end position="166"/>
    </location>
</feature>
<feature type="region of interest" description="Disordered" evidence="4">
    <location>
        <begin position="507"/>
        <end position="528"/>
    </location>
</feature>
<feature type="region of interest" description="Disordered" evidence="4">
    <location>
        <begin position="549"/>
        <end position="611"/>
    </location>
</feature>
<feature type="compositionally biased region" description="Low complexity" evidence="4">
    <location>
        <begin position="552"/>
        <end position="571"/>
    </location>
</feature>
<feature type="modified residue" description="Phosphotyrosine" evidence="7">
    <location>
        <position position="47"/>
    </location>
</feature>
<feature type="modified residue" description="Phosphoserine" evidence="10">
    <location>
        <position position="130"/>
    </location>
</feature>
<feature type="modified residue" description="Phosphoserine" evidence="10">
    <location>
        <position position="303"/>
    </location>
</feature>
<feature type="modified residue" description="Phosphoserine" evidence="9">
    <location>
        <position position="597"/>
    </location>
</feature>
<feature type="modified residue" description="Phosphotyrosine" evidence="7">
    <location>
        <position position="618"/>
    </location>
</feature>
<feature type="sequence conflict" description="In Ref. 1; AAF37891." evidence="6" ref="1">
    <original>S</original>
    <variation>W</variation>
    <location>
        <position position="125"/>
    </location>
</feature>
<feature type="sequence conflict" description="In Ref. 4; AAC36336." evidence="6" ref="4">
    <original>R</original>
    <variation>K</variation>
    <location>
        <position position="442"/>
    </location>
</feature>
<feature type="strand" evidence="11">
    <location>
        <begin position="189"/>
        <end position="197"/>
    </location>
</feature>
<feature type="strand" evidence="11">
    <location>
        <begin position="203"/>
        <end position="205"/>
    </location>
</feature>
<feature type="strand" evidence="11">
    <location>
        <begin position="212"/>
        <end position="220"/>
    </location>
</feature>
<feature type="strand" evidence="11">
    <location>
        <begin position="222"/>
        <end position="224"/>
    </location>
</feature>
<feature type="strand" evidence="11">
    <location>
        <begin position="227"/>
        <end position="234"/>
    </location>
</feature>
<feature type="strand" evidence="11">
    <location>
        <begin position="237"/>
        <end position="239"/>
    </location>
</feature>
<feature type="turn" evidence="11">
    <location>
        <begin position="246"/>
        <end position="248"/>
    </location>
</feature>
<feature type="strand" evidence="11">
    <location>
        <begin position="258"/>
        <end position="260"/>
    </location>
</feature>
<feature type="strand" evidence="11">
    <location>
        <begin position="276"/>
        <end position="280"/>
    </location>
</feature>
<feature type="helix" evidence="11">
    <location>
        <begin position="284"/>
        <end position="299"/>
    </location>
</feature>
<organism evidence="8">
    <name type="scientific">Mus musculus</name>
    <name type="common">Mouse</name>
    <dbReference type="NCBI Taxonomy" id="10090"/>
    <lineage>
        <taxon>Eukaryota</taxon>
        <taxon>Metazoa</taxon>
        <taxon>Chordata</taxon>
        <taxon>Craniata</taxon>
        <taxon>Vertebrata</taxon>
        <taxon>Euteleostomi</taxon>
        <taxon>Mammalia</taxon>
        <taxon>Eutheria</taxon>
        <taxon>Euarchontoglires</taxon>
        <taxon>Glires</taxon>
        <taxon>Rodentia</taxon>
        <taxon>Myomorpha</taxon>
        <taxon>Muroidea</taxon>
        <taxon>Muridae</taxon>
        <taxon>Murinae</taxon>
        <taxon>Mus</taxon>
        <taxon>Mus</taxon>
    </lineage>
</organism>